<comment type="function">
    <text evidence="1">Stabilizes the interaction between PsaC and the PSI core, assists the docking of the ferredoxin to PSI and interacts with ferredoxin-NADP oxidoreductase.</text>
</comment>
<comment type="subcellular location">
    <subcellularLocation>
        <location evidence="1">Plastid</location>
        <location evidence="1">Chloroplast thylakoid membrane</location>
        <topology evidence="1">Peripheral membrane protein</topology>
    </subcellularLocation>
</comment>
<comment type="PTM">
    <text>2 isoforms exists (ratio 1:1). With or without the N-terminal alanine.</text>
</comment>
<comment type="similarity">
    <text evidence="3">Belongs to the PsaE family.</text>
</comment>
<sequence>MASSSMASAASGFMVATPNIATSNTAPRTSMLFFSSSKNNTTTNFPRLVVRAAEEAAPPAATATAEGEAPPAKAAKPPPIGPKRGTKVRVLRKESYWYKGVGSVVAVDQDPNTRYPVVVRFNKVNYANVSTNNYALDEVEEVK</sequence>
<name>PSAEB_NICSY</name>
<organism>
    <name type="scientific">Nicotiana sylvestris</name>
    <name type="common">Wood tobacco</name>
    <name type="synonym">South American tobacco</name>
    <dbReference type="NCBI Taxonomy" id="4096"/>
    <lineage>
        <taxon>Eukaryota</taxon>
        <taxon>Viridiplantae</taxon>
        <taxon>Streptophyta</taxon>
        <taxon>Embryophyta</taxon>
        <taxon>Tracheophyta</taxon>
        <taxon>Spermatophyta</taxon>
        <taxon>Magnoliopsida</taxon>
        <taxon>eudicotyledons</taxon>
        <taxon>Gunneridae</taxon>
        <taxon>Pentapetalae</taxon>
        <taxon>asterids</taxon>
        <taxon>lamiids</taxon>
        <taxon>Solanales</taxon>
        <taxon>Solanaceae</taxon>
        <taxon>Nicotianoideae</taxon>
        <taxon>Nicotianeae</taxon>
        <taxon>Nicotiana</taxon>
    </lineage>
</organism>
<gene>
    <name type="primary">PSAEB</name>
</gene>
<evidence type="ECO:0000250" key="1"/>
<evidence type="ECO:0000256" key="2">
    <source>
        <dbReference type="SAM" id="MobiDB-lite"/>
    </source>
</evidence>
<evidence type="ECO:0000305" key="3"/>
<keyword id="KW-0150">Chloroplast</keyword>
<keyword id="KW-0903">Direct protein sequencing</keyword>
<keyword id="KW-0472">Membrane</keyword>
<keyword id="KW-0602">Photosynthesis</keyword>
<keyword id="KW-0603">Photosystem I</keyword>
<keyword id="KW-0934">Plastid</keyword>
<keyword id="KW-1185">Reference proteome</keyword>
<keyword id="KW-0793">Thylakoid</keyword>
<keyword id="KW-0809">Transit peptide</keyword>
<accession>Q41229</accession>
<accession>Q40429</accession>
<feature type="transit peptide" description="Chloroplast">
    <location>
        <begin position="1"/>
        <end position="51"/>
    </location>
</feature>
<feature type="chain" id="PRO_0000029384" description="Photosystem I reaction center subunit IV B, chloroplastic">
    <location>
        <begin position="52"/>
        <end position="143"/>
    </location>
</feature>
<feature type="chain" id="PRO_0000029385" description="Photosystem I reaction center subunit IV B isoform 2">
    <location>
        <begin position="53"/>
        <end position="141"/>
    </location>
</feature>
<feature type="region of interest" description="Disordered" evidence="2">
    <location>
        <begin position="56"/>
        <end position="86"/>
    </location>
</feature>
<feature type="compositionally biased region" description="Low complexity" evidence="2">
    <location>
        <begin position="56"/>
        <end position="75"/>
    </location>
</feature>
<feature type="sequence conflict" description="In Ref. 2." evidence="3" ref="2">
    <original>V</original>
    <variation>VSTPV</variation>
    <location>
        <position position="88"/>
    </location>
</feature>
<proteinExistence type="evidence at protein level"/>
<protein>
    <recommendedName>
        <fullName>Photosystem I reaction center subunit IV B, chloroplastic</fullName>
        <shortName>PSI-E B</shortName>
    </recommendedName>
    <component>
        <recommendedName>
            <fullName>Photosystem I reaction center subunit IV B isoform 2</fullName>
        </recommendedName>
    </component>
</protein>
<dbReference type="EMBL" id="S72358">
    <property type="protein sequence ID" value="AAB31705.1"/>
    <property type="molecule type" value="mRNA"/>
</dbReference>
<dbReference type="EMBL" id="D42070">
    <property type="protein sequence ID" value="BAA07667.1"/>
    <property type="molecule type" value="Genomic_DNA"/>
</dbReference>
<dbReference type="PIR" id="T15056">
    <property type="entry name" value="T15056"/>
</dbReference>
<dbReference type="PIR" id="T16963">
    <property type="entry name" value="T16963"/>
</dbReference>
<dbReference type="RefSeq" id="NP_001289527.1">
    <property type="nucleotide sequence ID" value="NM_001302598.2"/>
</dbReference>
<dbReference type="SMR" id="Q41229"/>
<dbReference type="STRING" id="4096.Q41229"/>
<dbReference type="GeneID" id="104216219"/>
<dbReference type="KEGG" id="nsy:104216219"/>
<dbReference type="eggNOG" id="ENOG502S1U2">
    <property type="taxonomic scope" value="Eukaryota"/>
</dbReference>
<dbReference type="Proteomes" id="UP000189701">
    <property type="component" value="Unplaced"/>
</dbReference>
<dbReference type="GO" id="GO:0009535">
    <property type="term" value="C:chloroplast thylakoid membrane"/>
    <property type="evidence" value="ECO:0007669"/>
    <property type="project" value="UniProtKB-SubCell"/>
</dbReference>
<dbReference type="GO" id="GO:0009538">
    <property type="term" value="C:photosystem I reaction center"/>
    <property type="evidence" value="ECO:0007669"/>
    <property type="project" value="InterPro"/>
</dbReference>
<dbReference type="GO" id="GO:0015979">
    <property type="term" value="P:photosynthesis"/>
    <property type="evidence" value="ECO:0007669"/>
    <property type="project" value="UniProtKB-KW"/>
</dbReference>
<dbReference type="Gene3D" id="2.30.30.50">
    <property type="match status" value="1"/>
</dbReference>
<dbReference type="InterPro" id="IPR008990">
    <property type="entry name" value="Elect_transpt_acc-like_dom_sf"/>
</dbReference>
<dbReference type="InterPro" id="IPR003375">
    <property type="entry name" value="PSI_PsaE"/>
</dbReference>
<dbReference type="PANTHER" id="PTHR34549">
    <property type="entry name" value="PHOTOSYSTEM I REACTION CENTER SUBUNIT IV A, CHLOROPLASTIC-RELATED"/>
    <property type="match status" value="1"/>
</dbReference>
<dbReference type="PANTHER" id="PTHR34549:SF8">
    <property type="entry name" value="PHOTOSYSTEM I REACTION CENTER SUBUNIT IV B, CHLOROPLASTIC"/>
    <property type="match status" value="1"/>
</dbReference>
<dbReference type="Pfam" id="PF02427">
    <property type="entry name" value="PSI_PsaE"/>
    <property type="match status" value="1"/>
</dbReference>
<dbReference type="SUPFAM" id="SSF50090">
    <property type="entry name" value="Electron transport accessory proteins"/>
    <property type="match status" value="1"/>
</dbReference>
<reference key="1">
    <citation type="journal article" date="1994" name="Plant Cell Physiol.">
        <title>Microheterogeneity of PSI-E subunit of photosystem I in Nicotiana sylvestris.</title>
        <authorList>
            <person name="Obokata J."/>
            <person name="Mikami K."/>
            <person name="Yamamoto Y."/>
            <person name="Hayashida N."/>
        </authorList>
    </citation>
    <scope>NUCLEOTIDE SEQUENCE [MRNA]</scope>
    <scope>PARTIAL PROTEIN SEQUENCE</scope>
    <source>
        <tissue>Leaf</tissue>
    </source>
</reference>
<reference key="2">
    <citation type="journal article" date="1995" name="Plant Physiol.">
        <title>Cloning of a nuclear-encoded photosystem I gene, psaEb, in Nicotiana sylvestris.</title>
        <authorList>
            <person name="Kubota T."/>
            <person name="Yamamoto Y.Y."/>
            <person name="Obokata J."/>
        </authorList>
    </citation>
    <scope>NUCLEOTIDE SEQUENCE [GENOMIC DNA]</scope>
</reference>